<name>AMT11_SOLLC</name>
<sequence>MACSVDTLAPFLGPNTTNAVAAASYICNQFSGVSDRFVDTGYAIDSTYLLFSAYLVFSMQLGFAMLLAGSVRNTMNIMLTNVLDAAAGGLFYYLFGFAFALGGPSNGFIGRHFFGLKEIPSNSFDYMNFLYQWAFAIAAAGITSGSIAERTQFVAYLIYSSFLTGFVYPVVSHWFWTPDGWASPTNSNLLFGSGVIDFAGSGVVHMVGGIAGFYGALIEGPRIGRYDHTGRSVALRGHSASLVVLGTFLLWFGWYGFNPGSFNKILVTYGASGGYYGQWSAVGRTAVTTTLAGCTAALTTLFGKRILSGHWNVTDVCNGLLGGFAAITAGCSVVEPWAAIICGFVAALVLIGFNMLAEKFKYDDPLEAAQLHGGCGAWGIIFTGLFAKGEFVDQVYPGKPGRPHGLFMGGGGKLLGAHIIQILVIIGWVSATMGPLFYILHKFKLLRISSEDEMAGMDLTRHGGFAYYHEEDPKLGMQMRRIEPTTST</sequence>
<gene>
    <name type="primary">AMT1-1</name>
</gene>
<comment type="function">
    <text evidence="2 3">Ammonium transporter that may be involved in ammonium uptake from the soil.</text>
</comment>
<comment type="subcellular location">
    <subcellularLocation>
        <location evidence="4">Membrane</location>
        <topology evidence="4">Multi-pass membrane protein</topology>
    </subcellularLocation>
</comment>
<comment type="tissue specificity">
    <text>Root hairs and leaves.</text>
</comment>
<comment type="induction">
    <text evidence="2">By nitrogen deprivation.</text>
</comment>
<comment type="similarity">
    <text evidence="4">Belongs to the ammonia transporter channel (TC 1.A.11.2) family.</text>
</comment>
<keyword id="KW-0924">Ammonia transport</keyword>
<keyword id="KW-0472">Membrane</keyword>
<keyword id="KW-1185">Reference proteome</keyword>
<keyword id="KW-0812">Transmembrane</keyword>
<keyword id="KW-1133">Transmembrane helix</keyword>
<keyword id="KW-0813">Transport</keyword>
<protein>
    <recommendedName>
        <fullName>Ammonium transporter 1 member 1</fullName>
    </recommendedName>
    <alternativeName>
        <fullName>LeAMT1;1</fullName>
    </alternativeName>
</protein>
<feature type="chain" id="PRO_0000139748" description="Ammonium transporter 1 member 1">
    <location>
        <begin position="1"/>
        <end position="488"/>
    </location>
</feature>
<feature type="transmembrane region" description="Helical" evidence="1">
    <location>
        <begin position="47"/>
        <end position="69"/>
    </location>
</feature>
<feature type="transmembrane region" description="Helical" evidence="1">
    <location>
        <begin position="90"/>
        <end position="109"/>
    </location>
</feature>
<feature type="transmembrane region" description="Helical" evidence="1">
    <location>
        <begin position="129"/>
        <end position="148"/>
    </location>
</feature>
<feature type="transmembrane region" description="Helical" evidence="1">
    <location>
        <begin position="153"/>
        <end position="175"/>
    </location>
</feature>
<feature type="transmembrane region" description="Helical" evidence="1">
    <location>
        <begin position="195"/>
        <end position="217"/>
    </location>
</feature>
<feature type="transmembrane region" description="Helical" evidence="1">
    <location>
        <begin position="238"/>
        <end position="257"/>
    </location>
</feature>
<feature type="transmembrane region" description="Helical" evidence="1">
    <location>
        <begin position="281"/>
        <end position="303"/>
    </location>
</feature>
<feature type="transmembrane region" description="Helical" evidence="1">
    <location>
        <begin position="316"/>
        <end position="333"/>
    </location>
</feature>
<feature type="transmembrane region" description="Helical" evidence="1">
    <location>
        <begin position="337"/>
        <end position="356"/>
    </location>
</feature>
<feature type="transmembrane region" description="Helical" evidence="1">
    <location>
        <begin position="368"/>
        <end position="387"/>
    </location>
</feature>
<feature type="transmembrane region" description="Helical" evidence="1">
    <location>
        <begin position="418"/>
        <end position="440"/>
    </location>
</feature>
<reference key="1">
    <citation type="journal article" date="1996" name="Proc. Natl. Acad. Sci. U.S.A.">
        <title>Preferential expression of an ammonium transporter and of two putative nitrate transporters in root hairs of tomato.</title>
        <authorList>
            <person name="Lauter F.-R."/>
            <person name="Ninnemann O."/>
            <person name="Bucher M."/>
            <person name="Riesmeier J.W."/>
            <person name="Frommer W.B."/>
        </authorList>
    </citation>
    <scope>NUCLEOTIDE SEQUENCE [MRNA]</scope>
    <scope>FUNCTION</scope>
</reference>
<reference key="2">
    <citation type="journal article" date="2000" name="Plant J.">
        <title>Differential regulation of three functional ammonium transporter genes by nitrogen in root hairs and by light in leaves of tomato.</title>
        <authorList>
            <person name="von Wiren N."/>
            <person name="Lauter F.-R."/>
            <person name="Ninnemann O."/>
            <person name="Gillissen B."/>
            <person name="Walch-Liu P."/>
            <person name="Engels C."/>
            <person name="Jost W."/>
            <person name="Frommer W.B."/>
        </authorList>
    </citation>
    <scope>FUNCTION</scope>
    <scope>INDUCTION</scope>
</reference>
<evidence type="ECO:0000255" key="1"/>
<evidence type="ECO:0000269" key="2">
    <source>
    </source>
</evidence>
<evidence type="ECO:0000269" key="3">
    <source>
    </source>
</evidence>
<evidence type="ECO:0000305" key="4"/>
<accession>P58905</accession>
<organism>
    <name type="scientific">Solanum lycopersicum</name>
    <name type="common">Tomato</name>
    <name type="synonym">Lycopersicon esculentum</name>
    <dbReference type="NCBI Taxonomy" id="4081"/>
    <lineage>
        <taxon>Eukaryota</taxon>
        <taxon>Viridiplantae</taxon>
        <taxon>Streptophyta</taxon>
        <taxon>Embryophyta</taxon>
        <taxon>Tracheophyta</taxon>
        <taxon>Spermatophyta</taxon>
        <taxon>Magnoliopsida</taxon>
        <taxon>eudicotyledons</taxon>
        <taxon>Gunneridae</taxon>
        <taxon>Pentapetalae</taxon>
        <taxon>asterids</taxon>
        <taxon>lamiids</taxon>
        <taxon>Solanales</taxon>
        <taxon>Solanaceae</taxon>
        <taxon>Solanoideae</taxon>
        <taxon>Solaneae</taxon>
        <taxon>Solanum</taxon>
        <taxon>Solanum subgen. Lycopersicon</taxon>
    </lineage>
</organism>
<proteinExistence type="evidence at transcript level"/>
<dbReference type="EMBL" id="X92854">
    <property type="status" value="NOT_ANNOTATED_CDS"/>
    <property type="molecule type" value="mRNA"/>
</dbReference>
<dbReference type="SMR" id="P58905"/>
<dbReference type="FunCoup" id="P58905">
    <property type="interactions" value="52"/>
</dbReference>
<dbReference type="STRING" id="4081.P58905"/>
<dbReference type="TCDB" id="1.A.11.2.4">
    <property type="family name" value="the ammonium transporter channel (amt) family"/>
</dbReference>
<dbReference type="PaxDb" id="4081-Solyc09g090730.1.1"/>
<dbReference type="eggNOG" id="KOG0682">
    <property type="taxonomic scope" value="Eukaryota"/>
</dbReference>
<dbReference type="InParanoid" id="P58905"/>
<dbReference type="Proteomes" id="UP000004994">
    <property type="component" value="Unplaced"/>
</dbReference>
<dbReference type="ExpressionAtlas" id="P58905">
    <property type="expression patterns" value="baseline and differential"/>
</dbReference>
<dbReference type="GO" id="GO:0005886">
    <property type="term" value="C:plasma membrane"/>
    <property type="evidence" value="ECO:0000318"/>
    <property type="project" value="GO_Central"/>
</dbReference>
<dbReference type="GO" id="GO:0008519">
    <property type="term" value="F:ammonium channel activity"/>
    <property type="evidence" value="ECO:0000318"/>
    <property type="project" value="GO_Central"/>
</dbReference>
<dbReference type="GO" id="GO:0097272">
    <property type="term" value="P:ammonium homeostasis"/>
    <property type="evidence" value="ECO:0000318"/>
    <property type="project" value="GO_Central"/>
</dbReference>
<dbReference type="GO" id="GO:0072488">
    <property type="term" value="P:ammonium transmembrane transport"/>
    <property type="evidence" value="ECO:0000316"/>
    <property type="project" value="UniProtKB"/>
</dbReference>
<dbReference type="FunFam" id="1.10.3430.10:FF:000006">
    <property type="entry name" value="Ammonium transporter"/>
    <property type="match status" value="1"/>
</dbReference>
<dbReference type="Gene3D" id="1.10.3430.10">
    <property type="entry name" value="Ammonium transporter AmtB like domains"/>
    <property type="match status" value="1"/>
</dbReference>
<dbReference type="InterPro" id="IPR029020">
    <property type="entry name" value="Ammonium/urea_transptr"/>
</dbReference>
<dbReference type="InterPro" id="IPR001905">
    <property type="entry name" value="Ammonium_transpt"/>
</dbReference>
<dbReference type="InterPro" id="IPR018047">
    <property type="entry name" value="Ammonium_transpt_CS"/>
</dbReference>
<dbReference type="InterPro" id="IPR024041">
    <property type="entry name" value="NH4_transpt_AmtB-like_dom"/>
</dbReference>
<dbReference type="NCBIfam" id="TIGR00836">
    <property type="entry name" value="amt"/>
    <property type="match status" value="1"/>
</dbReference>
<dbReference type="PANTHER" id="PTHR11730">
    <property type="entry name" value="AMMONIUM TRANSPORTER"/>
    <property type="match status" value="1"/>
</dbReference>
<dbReference type="PANTHER" id="PTHR11730:SF121">
    <property type="entry name" value="AMMONIUM TRANSPORTER 1 MEMBER 1"/>
    <property type="match status" value="1"/>
</dbReference>
<dbReference type="Pfam" id="PF00909">
    <property type="entry name" value="Ammonium_transp"/>
    <property type="match status" value="1"/>
</dbReference>
<dbReference type="SUPFAM" id="SSF111352">
    <property type="entry name" value="Ammonium transporter"/>
    <property type="match status" value="1"/>
</dbReference>
<dbReference type="PROSITE" id="PS01219">
    <property type="entry name" value="AMMONIUM_TRANSP"/>
    <property type="match status" value="1"/>
</dbReference>